<gene>
    <name type="primary">spaO</name>
    <name type="synonym">spa33</name>
</gene>
<geneLocation type="plasmid">
    <name>pINV</name>
</geneLocation>
<reference key="1">
    <citation type="submission" date="1995-05" db="EMBL/GenBank/DDBJ databases">
        <title>Comparison and high conservation of nucleotide sequences of spa-mxi regions between S.sonnei and S.flexneri -- identification of a new gene coding plausible membrane protein.</title>
        <authorList>
            <person name="Arakawa E."/>
            <person name="Kato J."/>
            <person name="Ito K."/>
            <person name="Watanabe H."/>
        </authorList>
    </citation>
    <scope>NUCLEOTIDE SEQUENCE [GENOMIC DNA]</scope>
    <source>
        <strain>HW383</strain>
    </source>
</reference>
<feature type="chain" id="PRO_0000184128" description="Surface presentation of antigens protein SpaO">
    <location>
        <begin position="1"/>
        <end position="293"/>
    </location>
</feature>
<name>SPAO_SHISO</name>
<protein>
    <recommendedName>
        <fullName>Surface presentation of antigens protein SpaO</fullName>
    </recommendedName>
    <alternativeName>
        <fullName>Spa33 protein</fullName>
    </alternativeName>
</protein>
<proteinExistence type="inferred from homology"/>
<evidence type="ECO:0000250" key="1"/>
<evidence type="ECO:0000305" key="2"/>
<sequence length="293" mass="33418">MLRIKHFDANEKLQILYAKQLCERFSIQTFKNKFTGSESLVTLTSVCGDWVIRIDTLSFLKKKYEVFSGFSTQESLLHLSKCVFIESSSVFSIPELSDKITFRITNEIQYATTGSHLCCFSSSLGIIYFDKMPVLRNQVSLDLLHHLLEFCLGSSNVRLATLKRIRTGDIIIVQKLYNLLLCNQVIIGDYIVNDNNEAKINLSESNGESEHTEVSLALFNYDDINVKVDFILLEKNMTINELKMYVENELFKFPDDIVKHVNIKVNGSLVGHGELVSIEDGYGIEISSWMVKE</sequence>
<keyword id="KW-0614">Plasmid</keyword>
<keyword id="KW-0843">Virulence</keyword>
<accession>P0A1L0</accession>
<accession>P35534</accession>
<accession>Q8VSG8</accession>
<dbReference type="EMBL" id="D50601">
    <property type="protein sequence ID" value="BAA09161.1"/>
    <property type="molecule type" value="Genomic_DNA"/>
</dbReference>
<dbReference type="RefSeq" id="WP_000944309.1">
    <property type="nucleotide sequence ID" value="NZ_WHSK01000261.1"/>
</dbReference>
<dbReference type="SMR" id="P0A1L0"/>
<dbReference type="STRING" id="216599.GCA_000283715_05243"/>
<dbReference type="OMA" id="DWVIRID"/>
<dbReference type="GO" id="GO:0009306">
    <property type="term" value="P:protein secretion"/>
    <property type="evidence" value="ECO:0007669"/>
    <property type="project" value="InterPro"/>
</dbReference>
<dbReference type="Gene3D" id="2.30.330.10">
    <property type="entry name" value="SpoA-like"/>
    <property type="match status" value="1"/>
</dbReference>
<dbReference type="InterPro" id="IPR001543">
    <property type="entry name" value="FliN-like_C"/>
</dbReference>
<dbReference type="InterPro" id="IPR036429">
    <property type="entry name" value="SpoA-like_sf"/>
</dbReference>
<dbReference type="InterPro" id="IPR003283">
    <property type="entry name" value="T3SS_OMP_SpaO"/>
</dbReference>
<dbReference type="Pfam" id="PF01052">
    <property type="entry name" value="FliMN_C"/>
    <property type="match status" value="1"/>
</dbReference>
<dbReference type="PRINTS" id="PR01339">
    <property type="entry name" value="TYPE3OMOPROT"/>
</dbReference>
<dbReference type="SUPFAM" id="SSF101801">
    <property type="entry name" value="Surface presentation of antigens (SPOA)"/>
    <property type="match status" value="1"/>
</dbReference>
<comment type="function">
    <text evidence="1">Required for surface presentation of invasion plasmid antigens. Could play a role in preserving the translocation competence of the Ipa antigens. Required for invasion and for secretion of the three Ipa proteins (By similarity).</text>
</comment>
<comment type="similarity">
    <text evidence="2">Belongs to the FliN/MopA/SpaO family.</text>
</comment>
<organism>
    <name type="scientific">Shigella sonnei</name>
    <dbReference type="NCBI Taxonomy" id="624"/>
    <lineage>
        <taxon>Bacteria</taxon>
        <taxon>Pseudomonadati</taxon>
        <taxon>Pseudomonadota</taxon>
        <taxon>Gammaproteobacteria</taxon>
        <taxon>Enterobacterales</taxon>
        <taxon>Enterobacteriaceae</taxon>
        <taxon>Shigella</taxon>
    </lineage>
</organism>